<accession>Q1RM35</accession>
<accession>Q502G1</accession>
<accession>Q6NWC2</accession>
<dbReference type="EMBL" id="BC067646">
    <property type="protein sequence ID" value="AAH67646.1"/>
    <property type="status" value="ALT_INIT"/>
    <property type="molecule type" value="mRNA"/>
</dbReference>
<dbReference type="EMBL" id="BC095710">
    <property type="protein sequence ID" value="AAH95710.1"/>
    <property type="status" value="ALT_INIT"/>
    <property type="molecule type" value="mRNA"/>
</dbReference>
<dbReference type="EMBL" id="BC115155">
    <property type="protein sequence ID" value="AAI15156.1"/>
    <property type="molecule type" value="mRNA"/>
</dbReference>
<dbReference type="RefSeq" id="NP_001035412.1">
    <property type="nucleotide sequence ID" value="NM_001040322.1"/>
</dbReference>
<dbReference type="SMR" id="Q1RM35"/>
<dbReference type="FunCoup" id="Q1RM35">
    <property type="interactions" value="772"/>
</dbReference>
<dbReference type="STRING" id="7955.ENSDARP00000093287"/>
<dbReference type="PaxDb" id="7955-ENSDARP00000093287"/>
<dbReference type="GeneID" id="678564"/>
<dbReference type="KEGG" id="dre:678564"/>
<dbReference type="AGR" id="ZFIN:ZDB-GENE-060421-8162"/>
<dbReference type="CTD" id="112942"/>
<dbReference type="ZFIN" id="ZDB-GENE-060421-8162">
    <property type="gene designation" value="cfap36"/>
</dbReference>
<dbReference type="eggNOG" id="KOG4511">
    <property type="taxonomic scope" value="Eukaryota"/>
</dbReference>
<dbReference type="InParanoid" id="Q1RM35"/>
<dbReference type="OrthoDB" id="272687at2759"/>
<dbReference type="PhylomeDB" id="Q1RM35"/>
<dbReference type="PRO" id="PR:Q1RM35"/>
<dbReference type="Proteomes" id="UP000000437">
    <property type="component" value="Chromosome 13"/>
</dbReference>
<dbReference type="GO" id="GO:0005930">
    <property type="term" value="C:axoneme"/>
    <property type="evidence" value="ECO:0000318"/>
    <property type="project" value="GO_Central"/>
</dbReference>
<dbReference type="GO" id="GO:0097546">
    <property type="term" value="C:ciliary base"/>
    <property type="evidence" value="ECO:0000318"/>
    <property type="project" value="GO_Central"/>
</dbReference>
<dbReference type="GO" id="GO:0031514">
    <property type="term" value="C:motile cilium"/>
    <property type="evidence" value="ECO:0007669"/>
    <property type="project" value="UniProtKB-SubCell"/>
</dbReference>
<dbReference type="GO" id="GO:0005634">
    <property type="term" value="C:nucleus"/>
    <property type="evidence" value="ECO:0007669"/>
    <property type="project" value="UniProtKB-SubCell"/>
</dbReference>
<dbReference type="Gene3D" id="1.20.1520.10">
    <property type="entry name" value="ADP-ribosylation factor-like 2-binding protein, domain"/>
    <property type="match status" value="1"/>
</dbReference>
<dbReference type="InterPro" id="IPR023379">
    <property type="entry name" value="BART_dom"/>
</dbReference>
<dbReference type="InterPro" id="IPR042541">
    <property type="entry name" value="BART_sf"/>
</dbReference>
<dbReference type="InterPro" id="IPR038888">
    <property type="entry name" value="CFAP36"/>
</dbReference>
<dbReference type="PANTHER" id="PTHR21532:SF0">
    <property type="entry name" value="CILIA- AND FLAGELLA-ASSOCIATED PROTEIN 36"/>
    <property type="match status" value="1"/>
</dbReference>
<dbReference type="PANTHER" id="PTHR21532">
    <property type="entry name" value="PHOSPHODIESTERASE HL"/>
    <property type="match status" value="1"/>
</dbReference>
<dbReference type="Pfam" id="PF11527">
    <property type="entry name" value="ARL2_Bind_BART"/>
    <property type="match status" value="1"/>
</dbReference>
<organism>
    <name type="scientific">Danio rerio</name>
    <name type="common">Zebrafish</name>
    <name type="synonym">Brachydanio rerio</name>
    <dbReference type="NCBI Taxonomy" id="7955"/>
    <lineage>
        <taxon>Eukaryota</taxon>
        <taxon>Metazoa</taxon>
        <taxon>Chordata</taxon>
        <taxon>Craniata</taxon>
        <taxon>Vertebrata</taxon>
        <taxon>Euteleostomi</taxon>
        <taxon>Actinopterygii</taxon>
        <taxon>Neopterygii</taxon>
        <taxon>Teleostei</taxon>
        <taxon>Ostariophysi</taxon>
        <taxon>Cypriniformes</taxon>
        <taxon>Danionidae</taxon>
        <taxon>Danioninae</taxon>
        <taxon>Danio</taxon>
    </lineage>
</organism>
<gene>
    <name evidence="5" type="primary">cfap36</name>
    <name evidence="5" type="synonym">ccdc104</name>
    <name type="ORF">zgc:136497</name>
</gene>
<keyword id="KW-0025">Alternative splicing</keyword>
<keyword id="KW-0966">Cell projection</keyword>
<keyword id="KW-0969">Cilium</keyword>
<keyword id="KW-0175">Coiled coil</keyword>
<keyword id="KW-0963">Cytoplasm</keyword>
<keyword id="KW-0282">Flagellum</keyword>
<keyword id="KW-0539">Nucleus</keyword>
<keyword id="KW-1185">Reference proteome</keyword>
<proteinExistence type="evidence at transcript level"/>
<reference key="1">
    <citation type="submission" date="2006-04" db="EMBL/GenBank/DDBJ databases">
        <authorList>
            <consortium name="NIH - Zebrafish Gene Collection (ZGC) project"/>
        </authorList>
    </citation>
    <scope>NUCLEOTIDE SEQUENCE [LARGE SCALE MRNA] (ISOFORMS 1 AND 2)</scope>
    <source>
        <tissue>Embryo</tissue>
        <tissue>Heart</tissue>
        <tissue>Ovary</tissue>
    </source>
</reference>
<name>CFA36_DANRE</name>
<protein>
    <recommendedName>
        <fullName evidence="5">Cilia- and flagella-associated protein 36</fullName>
    </recommendedName>
    <alternativeName>
        <fullName evidence="5">Coiled-coil domain-containing protein 104</fullName>
    </alternativeName>
</protein>
<sequence>MAEDSEWVPESIAGFLGSPDWLIPLAEFMESRCSVFDDEDENKLTYTEIHQQYKQLVERLLENYMQDVGISEQQFLEACSSFSSSASLQTVFQPVLATDDFQMFRSLMVQKNMELQLQALHVIKQRNGGLPECLTDGVDVMSELEQQEMKILQEVLRRSKEEYDLQMGQCGLGSEDLASTSSSVSETPQNPEQRLSNGVSDPLTLTQPDSEMEESSTATQRKMEESEPTATTACKSKALPAVRAPLRGSVVAKQSSAERERELERARDTHTDCRTLTDEVALQQRSEYLKQQRDKLQALKRQTGKGLTDTAAAAAPEPKPATQEISVEEKKKLQKRKHVAEKLKEEVIKK</sequence>
<evidence type="ECO:0000250" key="1">
    <source>
        <dbReference type="UniProtKB" id="Q96G28"/>
    </source>
</evidence>
<evidence type="ECO:0000255" key="2"/>
<evidence type="ECO:0000256" key="3">
    <source>
        <dbReference type="SAM" id="MobiDB-lite"/>
    </source>
</evidence>
<evidence type="ECO:0000303" key="4">
    <source ref="1"/>
</evidence>
<evidence type="ECO:0000305" key="5"/>
<comment type="subcellular location">
    <subcellularLocation>
        <location evidence="1">Nucleus</location>
    </subcellularLocation>
    <subcellularLocation>
        <location evidence="1">Cytoplasm</location>
    </subcellularLocation>
    <subcellularLocation>
        <location evidence="5">Cell projection</location>
        <location evidence="5">Cilium</location>
        <location evidence="5">Flagellum</location>
    </subcellularLocation>
</comment>
<comment type="alternative products">
    <event type="alternative splicing"/>
    <isoform>
        <id>Q1RM35-1</id>
        <name>1</name>
        <sequence type="displayed"/>
    </isoform>
    <isoform>
        <id>Q1RM35-2</id>
        <name>2</name>
        <sequence type="described" ref="VSP_023339"/>
    </isoform>
</comment>
<comment type="similarity">
    <text evidence="5">Belongs to the CFAP36 family.</text>
</comment>
<comment type="sequence caution" evidence="5">
    <conflict type="erroneous initiation">
        <sequence resource="EMBL-CDS" id="AAH67646"/>
    </conflict>
</comment>
<comment type="sequence caution" evidence="5">
    <conflict type="erroneous initiation">
        <sequence resource="EMBL-CDS" id="AAH95710"/>
    </conflict>
</comment>
<feature type="chain" id="PRO_0000278642" description="Cilia- and flagella-associated protein 36">
    <location>
        <begin position="1"/>
        <end position="350"/>
    </location>
</feature>
<feature type="region of interest" description="Disordered" evidence="3">
    <location>
        <begin position="171"/>
        <end position="233"/>
    </location>
</feature>
<feature type="region of interest" description="Disordered" evidence="3">
    <location>
        <begin position="301"/>
        <end position="337"/>
    </location>
</feature>
<feature type="coiled-coil region" evidence="2">
    <location>
        <begin position="142"/>
        <end position="167"/>
    </location>
</feature>
<feature type="coiled-coil region" evidence="2">
    <location>
        <begin position="280"/>
        <end position="350"/>
    </location>
</feature>
<feature type="compositionally biased region" description="Polar residues" evidence="3">
    <location>
        <begin position="177"/>
        <end position="220"/>
    </location>
</feature>
<feature type="splice variant" id="VSP_023339" description="In isoform 2." evidence="4">
    <location>
        <begin position="199"/>
        <end position="211"/>
    </location>
</feature>
<feature type="sequence conflict" description="In Ref. 1; AAI15156." evidence="5" ref="1">
    <location>
        <position position="225"/>
    </location>
</feature>
<feature type="sequence conflict" description="In Ref. 1; AAH95710." evidence="5" ref="1">
    <original>T</original>
    <variation>A</variation>
    <location>
        <position position="231"/>
    </location>
</feature>
<feature type="sequence conflict" description="In Ref. 1; AAI15156." evidence="5" ref="1">
    <original>V</original>
    <variation>A</variation>
    <location>
        <position position="251"/>
    </location>
</feature>
<feature type="sequence conflict" description="In Ref. 1; AAI15156." evidence="5" ref="1">
    <original>A</original>
    <variation>T</variation>
    <location>
        <position position="315"/>
    </location>
</feature>